<organism>
    <name type="scientific">Bacillus subtilis (strain 168)</name>
    <dbReference type="NCBI Taxonomy" id="224308"/>
    <lineage>
        <taxon>Bacteria</taxon>
        <taxon>Bacillati</taxon>
        <taxon>Bacillota</taxon>
        <taxon>Bacilli</taxon>
        <taxon>Bacillales</taxon>
        <taxon>Bacillaceae</taxon>
        <taxon>Bacillus</taxon>
    </lineage>
</organism>
<sequence>MNELEHFSPEDTRIFGRPFGFGRPFGFGRPFGFGYGFGRPGFGYGFGRPFGFFGGPFIGGLAGGLIGSALFNPYLYGGYPYYPYAPFPFYY</sequence>
<protein>
    <recommendedName>
        <fullName>Uncharacterized protein YmaG</fullName>
    </recommendedName>
</protein>
<keyword id="KW-1003">Cell membrane</keyword>
<keyword id="KW-0472">Membrane</keyword>
<keyword id="KW-1185">Reference proteome</keyword>
<keyword id="KW-0812">Transmembrane</keyword>
<keyword id="KW-1133">Transmembrane helix</keyword>
<proteinExistence type="predicted"/>
<accession>O31793</accession>
<feature type="chain" id="PRO_0000049632" description="Uncharacterized protein YmaG">
    <location>
        <begin position="1"/>
        <end position="91"/>
    </location>
</feature>
<feature type="transmembrane region" description="Helical" evidence="1">
    <location>
        <begin position="50"/>
        <end position="70"/>
    </location>
</feature>
<evidence type="ECO:0000255" key="1"/>
<evidence type="ECO:0000305" key="2"/>
<dbReference type="EMBL" id="AL009126">
    <property type="protein sequence ID" value="CAB13615.2"/>
    <property type="molecule type" value="Genomic_DNA"/>
</dbReference>
<dbReference type="PIR" id="A69884">
    <property type="entry name" value="A69884"/>
</dbReference>
<dbReference type="RefSeq" id="NP_389613.2">
    <property type="nucleotide sequence ID" value="NC_000964.3"/>
</dbReference>
<dbReference type="RefSeq" id="WP_003245252.1">
    <property type="nucleotide sequence ID" value="NZ_OZ025638.1"/>
</dbReference>
<dbReference type="FunCoup" id="O31793">
    <property type="interactions" value="16"/>
</dbReference>
<dbReference type="STRING" id="224308.BSU17310"/>
<dbReference type="PaxDb" id="224308-BSU17310"/>
<dbReference type="EnsemblBacteria" id="CAB13615">
    <property type="protein sequence ID" value="CAB13615"/>
    <property type="gene ID" value="BSU_17310"/>
</dbReference>
<dbReference type="GeneID" id="940062"/>
<dbReference type="KEGG" id="bsu:BSU17310"/>
<dbReference type="PATRIC" id="fig|224308.179.peg.1877"/>
<dbReference type="InParanoid" id="O31793"/>
<dbReference type="BioCyc" id="BSUB:BSU17310-MONOMER"/>
<dbReference type="Proteomes" id="UP000001570">
    <property type="component" value="Chromosome"/>
</dbReference>
<dbReference type="GO" id="GO:0005886">
    <property type="term" value="C:plasma membrane"/>
    <property type="evidence" value="ECO:0007669"/>
    <property type="project" value="UniProtKB-SubCell"/>
</dbReference>
<reference key="1">
    <citation type="journal article" date="1997" name="Nature">
        <title>The complete genome sequence of the Gram-positive bacterium Bacillus subtilis.</title>
        <authorList>
            <person name="Kunst F."/>
            <person name="Ogasawara N."/>
            <person name="Moszer I."/>
            <person name="Albertini A.M."/>
            <person name="Alloni G."/>
            <person name="Azevedo V."/>
            <person name="Bertero M.G."/>
            <person name="Bessieres P."/>
            <person name="Bolotin A."/>
            <person name="Borchert S."/>
            <person name="Borriss R."/>
            <person name="Boursier L."/>
            <person name="Brans A."/>
            <person name="Braun M."/>
            <person name="Brignell S.C."/>
            <person name="Bron S."/>
            <person name="Brouillet S."/>
            <person name="Bruschi C.V."/>
            <person name="Caldwell B."/>
            <person name="Capuano V."/>
            <person name="Carter N.M."/>
            <person name="Choi S.-K."/>
            <person name="Codani J.-J."/>
            <person name="Connerton I.F."/>
            <person name="Cummings N.J."/>
            <person name="Daniel R.A."/>
            <person name="Denizot F."/>
            <person name="Devine K.M."/>
            <person name="Duesterhoeft A."/>
            <person name="Ehrlich S.D."/>
            <person name="Emmerson P.T."/>
            <person name="Entian K.-D."/>
            <person name="Errington J."/>
            <person name="Fabret C."/>
            <person name="Ferrari E."/>
            <person name="Foulger D."/>
            <person name="Fritz C."/>
            <person name="Fujita M."/>
            <person name="Fujita Y."/>
            <person name="Fuma S."/>
            <person name="Galizzi A."/>
            <person name="Galleron N."/>
            <person name="Ghim S.-Y."/>
            <person name="Glaser P."/>
            <person name="Goffeau A."/>
            <person name="Golightly E.J."/>
            <person name="Grandi G."/>
            <person name="Guiseppi G."/>
            <person name="Guy B.J."/>
            <person name="Haga K."/>
            <person name="Haiech J."/>
            <person name="Harwood C.R."/>
            <person name="Henaut A."/>
            <person name="Hilbert H."/>
            <person name="Holsappel S."/>
            <person name="Hosono S."/>
            <person name="Hullo M.-F."/>
            <person name="Itaya M."/>
            <person name="Jones L.-M."/>
            <person name="Joris B."/>
            <person name="Karamata D."/>
            <person name="Kasahara Y."/>
            <person name="Klaerr-Blanchard M."/>
            <person name="Klein C."/>
            <person name="Kobayashi Y."/>
            <person name="Koetter P."/>
            <person name="Koningstein G."/>
            <person name="Krogh S."/>
            <person name="Kumano M."/>
            <person name="Kurita K."/>
            <person name="Lapidus A."/>
            <person name="Lardinois S."/>
            <person name="Lauber J."/>
            <person name="Lazarevic V."/>
            <person name="Lee S.-M."/>
            <person name="Levine A."/>
            <person name="Liu H."/>
            <person name="Masuda S."/>
            <person name="Mauel C."/>
            <person name="Medigue C."/>
            <person name="Medina N."/>
            <person name="Mellado R.P."/>
            <person name="Mizuno M."/>
            <person name="Moestl D."/>
            <person name="Nakai S."/>
            <person name="Noback M."/>
            <person name="Noone D."/>
            <person name="O'Reilly M."/>
            <person name="Ogawa K."/>
            <person name="Ogiwara A."/>
            <person name="Oudega B."/>
            <person name="Park S.-H."/>
            <person name="Parro V."/>
            <person name="Pohl T.M."/>
            <person name="Portetelle D."/>
            <person name="Porwollik S."/>
            <person name="Prescott A.M."/>
            <person name="Presecan E."/>
            <person name="Pujic P."/>
            <person name="Purnelle B."/>
            <person name="Rapoport G."/>
            <person name="Rey M."/>
            <person name="Reynolds S."/>
            <person name="Rieger M."/>
            <person name="Rivolta C."/>
            <person name="Rocha E."/>
            <person name="Roche B."/>
            <person name="Rose M."/>
            <person name="Sadaie Y."/>
            <person name="Sato T."/>
            <person name="Scanlan E."/>
            <person name="Schleich S."/>
            <person name="Schroeter R."/>
            <person name="Scoffone F."/>
            <person name="Sekiguchi J."/>
            <person name="Sekowska A."/>
            <person name="Seror S.J."/>
            <person name="Serror P."/>
            <person name="Shin B.-S."/>
            <person name="Soldo B."/>
            <person name="Sorokin A."/>
            <person name="Tacconi E."/>
            <person name="Takagi T."/>
            <person name="Takahashi H."/>
            <person name="Takemaru K."/>
            <person name="Takeuchi M."/>
            <person name="Tamakoshi A."/>
            <person name="Tanaka T."/>
            <person name="Terpstra P."/>
            <person name="Tognoni A."/>
            <person name="Tosato V."/>
            <person name="Uchiyama S."/>
            <person name="Vandenbol M."/>
            <person name="Vannier F."/>
            <person name="Vassarotti A."/>
            <person name="Viari A."/>
            <person name="Wambutt R."/>
            <person name="Wedler E."/>
            <person name="Wedler H."/>
            <person name="Weitzenegger T."/>
            <person name="Winters P."/>
            <person name="Wipat A."/>
            <person name="Yamamoto H."/>
            <person name="Yamane K."/>
            <person name="Yasumoto K."/>
            <person name="Yata K."/>
            <person name="Yoshida K."/>
            <person name="Yoshikawa H.-F."/>
            <person name="Zumstein E."/>
            <person name="Yoshikawa H."/>
            <person name="Danchin A."/>
        </authorList>
    </citation>
    <scope>NUCLEOTIDE SEQUENCE [LARGE SCALE GENOMIC DNA]</scope>
    <source>
        <strain>168</strain>
    </source>
</reference>
<name>YMAG_BACSU</name>
<comment type="subcellular location">
    <subcellularLocation>
        <location evidence="2">Cell membrane</location>
        <topology evidence="2">Single-pass membrane protein</topology>
    </subcellularLocation>
</comment>
<gene>
    <name type="primary">ymaG</name>
    <name type="ordered locus">BSU17310</name>
</gene>